<accession>Q9BRJ2</accession>
<accession>A1L436</accession>
<accession>Q6ZMJ5</accession>
<sequence length="306" mass="35351">MAAPIPQGFSCLSRFLGWWFRQPVLVTQSAAIVPVRTKKRFTPPIYQPKFKTEKEFMQHARKAGLVIPPEKSDRSIHLACTAGIFDAYVPPEGDARISSLSKEGLIERTERMKKTMASQVSIRRIKDYDANFKIKDFPEKAKDIFIEAHLCLNNSDHDRLHTLVTEHCFPDMTWDIKYKTVRWSFVESLEPSHVVQVRCSSMMNQGNVYGQITVRMHTRQTLAIYDRFGRLMYGQEDVPKDVLEYVVFEKQLTNPYGSWRMHTKIVPPWAPPKQPILKTVMIPGPQLKPEEEYEEAQGEAQKPQLA</sequence>
<evidence type="ECO:0000255" key="1"/>
<evidence type="ECO:0000256" key="2">
    <source>
        <dbReference type="SAM" id="MobiDB-lite"/>
    </source>
</evidence>
<evidence type="ECO:0000269" key="3">
    <source>
    </source>
</evidence>
<evidence type="ECO:0000269" key="4">
    <source>
    </source>
</evidence>
<evidence type="ECO:0000269" key="5">
    <source>
    </source>
</evidence>
<evidence type="ECO:0000269" key="6">
    <source>
    </source>
</evidence>
<evidence type="ECO:0000269" key="7">
    <source>
    </source>
</evidence>
<evidence type="ECO:0000269" key="8">
    <source>
    </source>
</evidence>
<evidence type="ECO:0000303" key="9">
    <source>
    </source>
</evidence>
<evidence type="ECO:0000305" key="10"/>
<evidence type="ECO:0000312" key="11">
    <source>
        <dbReference type="HGNC" id="HGNC:16651"/>
    </source>
</evidence>
<evidence type="ECO:0007744" key="12">
    <source>
        <dbReference type="PDB" id="3J7Y"/>
    </source>
</evidence>
<evidence type="ECO:0007744" key="13">
    <source>
        <dbReference type="PDB" id="3J9M"/>
    </source>
</evidence>
<evidence type="ECO:0007744" key="14">
    <source>
        <dbReference type="PDB" id="5OOL"/>
    </source>
</evidence>
<evidence type="ECO:0007744" key="15">
    <source>
        <dbReference type="PDB" id="5OOM"/>
    </source>
</evidence>
<evidence type="ECO:0007744" key="16">
    <source>
        <dbReference type="PDB" id="6ZM5"/>
    </source>
</evidence>
<evidence type="ECO:0007744" key="17">
    <source>
        <dbReference type="PDB" id="7A5K"/>
    </source>
</evidence>
<evidence type="ECO:0007744" key="18">
    <source>
        <dbReference type="PDB" id="7QH6"/>
    </source>
</evidence>
<evidence type="ECO:0007744" key="19">
    <source>
        <dbReference type="PDB" id="7QH7"/>
    </source>
</evidence>
<evidence type="ECO:0007829" key="20">
    <source>
        <dbReference type="PDB" id="7OF0"/>
    </source>
</evidence>
<evidence type="ECO:0007829" key="21">
    <source>
        <dbReference type="PDB" id="7OIB"/>
    </source>
</evidence>
<evidence type="ECO:0007829" key="22">
    <source>
        <dbReference type="PDB" id="7QH6"/>
    </source>
</evidence>
<evidence type="ECO:0007829" key="23">
    <source>
        <dbReference type="PDB" id="8QU5"/>
    </source>
</evidence>
<protein>
    <recommendedName>
        <fullName evidence="9">Large ribosomal subunit protein mL45</fullName>
    </recommendedName>
    <alternativeName>
        <fullName>39S ribosomal protein L45, mitochondrial</fullName>
        <shortName>L45mt</shortName>
        <shortName>MRP-L45</shortName>
    </alternativeName>
</protein>
<reference key="1">
    <citation type="journal article" date="2004" name="Nat. Genet.">
        <title>Complete sequencing and characterization of 21,243 full-length human cDNAs.</title>
        <authorList>
            <person name="Ota T."/>
            <person name="Suzuki Y."/>
            <person name="Nishikawa T."/>
            <person name="Otsuki T."/>
            <person name="Sugiyama T."/>
            <person name="Irie R."/>
            <person name="Wakamatsu A."/>
            <person name="Hayashi K."/>
            <person name="Sato H."/>
            <person name="Nagai K."/>
            <person name="Kimura K."/>
            <person name="Makita H."/>
            <person name="Sekine M."/>
            <person name="Obayashi M."/>
            <person name="Nishi T."/>
            <person name="Shibahara T."/>
            <person name="Tanaka T."/>
            <person name="Ishii S."/>
            <person name="Yamamoto J."/>
            <person name="Saito K."/>
            <person name="Kawai Y."/>
            <person name="Isono Y."/>
            <person name="Nakamura Y."/>
            <person name="Nagahari K."/>
            <person name="Murakami K."/>
            <person name="Yasuda T."/>
            <person name="Iwayanagi T."/>
            <person name="Wagatsuma M."/>
            <person name="Shiratori A."/>
            <person name="Sudo H."/>
            <person name="Hosoiri T."/>
            <person name="Kaku Y."/>
            <person name="Kodaira H."/>
            <person name="Kondo H."/>
            <person name="Sugawara M."/>
            <person name="Takahashi M."/>
            <person name="Kanda K."/>
            <person name="Yokoi T."/>
            <person name="Furuya T."/>
            <person name="Kikkawa E."/>
            <person name="Omura Y."/>
            <person name="Abe K."/>
            <person name="Kamihara K."/>
            <person name="Katsuta N."/>
            <person name="Sato K."/>
            <person name="Tanikawa M."/>
            <person name="Yamazaki M."/>
            <person name="Ninomiya K."/>
            <person name="Ishibashi T."/>
            <person name="Yamashita H."/>
            <person name="Murakawa K."/>
            <person name="Fujimori K."/>
            <person name="Tanai H."/>
            <person name="Kimata M."/>
            <person name="Watanabe M."/>
            <person name="Hiraoka S."/>
            <person name="Chiba Y."/>
            <person name="Ishida S."/>
            <person name="Ono Y."/>
            <person name="Takiguchi S."/>
            <person name="Watanabe S."/>
            <person name="Yosida M."/>
            <person name="Hotuta T."/>
            <person name="Kusano J."/>
            <person name="Kanehori K."/>
            <person name="Takahashi-Fujii A."/>
            <person name="Hara H."/>
            <person name="Tanase T.-O."/>
            <person name="Nomura Y."/>
            <person name="Togiya S."/>
            <person name="Komai F."/>
            <person name="Hara R."/>
            <person name="Takeuchi K."/>
            <person name="Arita M."/>
            <person name="Imose N."/>
            <person name="Musashino K."/>
            <person name="Yuuki H."/>
            <person name="Oshima A."/>
            <person name="Sasaki N."/>
            <person name="Aotsuka S."/>
            <person name="Yoshikawa Y."/>
            <person name="Matsunawa H."/>
            <person name="Ichihara T."/>
            <person name="Shiohata N."/>
            <person name="Sano S."/>
            <person name="Moriya S."/>
            <person name="Momiyama H."/>
            <person name="Satoh N."/>
            <person name="Takami S."/>
            <person name="Terashima Y."/>
            <person name="Suzuki O."/>
            <person name="Nakagawa S."/>
            <person name="Senoh A."/>
            <person name="Mizoguchi H."/>
            <person name="Goto Y."/>
            <person name="Shimizu F."/>
            <person name="Wakebe H."/>
            <person name="Hishigaki H."/>
            <person name="Watanabe T."/>
            <person name="Sugiyama A."/>
            <person name="Takemoto M."/>
            <person name="Kawakami B."/>
            <person name="Yamazaki M."/>
            <person name="Watanabe K."/>
            <person name="Kumagai A."/>
            <person name="Itakura S."/>
            <person name="Fukuzumi Y."/>
            <person name="Fujimori Y."/>
            <person name="Komiyama M."/>
            <person name="Tashiro H."/>
            <person name="Tanigami A."/>
            <person name="Fujiwara T."/>
            <person name="Ono T."/>
            <person name="Yamada K."/>
            <person name="Fujii Y."/>
            <person name="Ozaki K."/>
            <person name="Hirao M."/>
            <person name="Ohmori Y."/>
            <person name="Kawabata A."/>
            <person name="Hikiji T."/>
            <person name="Kobatake N."/>
            <person name="Inagaki H."/>
            <person name="Ikema Y."/>
            <person name="Okamoto S."/>
            <person name="Okitani R."/>
            <person name="Kawakami T."/>
            <person name="Noguchi S."/>
            <person name="Itoh T."/>
            <person name="Shigeta K."/>
            <person name="Senba T."/>
            <person name="Matsumura K."/>
            <person name="Nakajima Y."/>
            <person name="Mizuno T."/>
            <person name="Morinaga M."/>
            <person name="Sasaki M."/>
            <person name="Togashi T."/>
            <person name="Oyama M."/>
            <person name="Hata H."/>
            <person name="Watanabe M."/>
            <person name="Komatsu T."/>
            <person name="Mizushima-Sugano J."/>
            <person name="Satoh T."/>
            <person name="Shirai Y."/>
            <person name="Takahashi Y."/>
            <person name="Nakagawa K."/>
            <person name="Okumura K."/>
            <person name="Nagase T."/>
            <person name="Nomura N."/>
            <person name="Kikuchi H."/>
            <person name="Masuho Y."/>
            <person name="Yamashita R."/>
            <person name="Nakai K."/>
            <person name="Yada T."/>
            <person name="Nakamura Y."/>
            <person name="Ohara O."/>
            <person name="Isogai T."/>
            <person name="Sugano S."/>
        </authorList>
    </citation>
    <scope>NUCLEOTIDE SEQUENCE [LARGE SCALE MRNA]</scope>
    <source>
        <tissue>Adipose tissue</tissue>
    </source>
</reference>
<reference key="2">
    <citation type="journal article" date="2004" name="Genome Res.">
        <title>The status, quality, and expansion of the NIH full-length cDNA project: the Mammalian Gene Collection (MGC).</title>
        <authorList>
            <consortium name="The MGC Project Team"/>
        </authorList>
    </citation>
    <scope>NUCLEOTIDE SEQUENCE [LARGE SCALE MRNA]</scope>
    <source>
        <tissue>Brain</tissue>
        <tissue>Ovary</tissue>
    </source>
</reference>
<reference key="3">
    <citation type="journal article" date="2001" name="J. Biol. Chem.">
        <title>The large subunit of the mammalian mitochondrial ribosome. Analysis of the complement of ribosomal proteins present.</title>
        <authorList>
            <person name="Koc E.C."/>
            <person name="Burkhart W."/>
            <person name="Blackburn K."/>
            <person name="Moyer M.B."/>
            <person name="Schlatzer D.M."/>
            <person name="Moseley A."/>
            <person name="Spremulli L.L."/>
        </authorList>
    </citation>
    <scope>IDENTIFICATION</scope>
</reference>
<reference key="4">
    <citation type="journal article" date="2011" name="BMC Syst. Biol.">
        <title>Initial characterization of the human central proteome.</title>
        <authorList>
            <person name="Burkard T.R."/>
            <person name="Planyavsky M."/>
            <person name="Kaupe I."/>
            <person name="Breitwieser F.P."/>
            <person name="Buerckstuemmer T."/>
            <person name="Bennett K.L."/>
            <person name="Superti-Furga G."/>
            <person name="Colinge J."/>
        </authorList>
    </citation>
    <scope>IDENTIFICATION BY MASS SPECTROMETRY [LARGE SCALE ANALYSIS]</scope>
</reference>
<reference key="5">
    <citation type="journal article" date="2015" name="Proteomics">
        <title>N-terminome analysis of the human mitochondrial proteome.</title>
        <authorList>
            <person name="Vaca Jacome A.S."/>
            <person name="Rabilloud T."/>
            <person name="Schaeffer-Reiss C."/>
            <person name="Rompais M."/>
            <person name="Ayoub D."/>
            <person name="Lane L."/>
            <person name="Bairoch A."/>
            <person name="Van Dorsselaer A."/>
            <person name="Carapito C."/>
        </authorList>
    </citation>
    <scope>IDENTIFICATION BY MASS SPECTROMETRY [LARGE SCALE ANALYSIS]</scope>
</reference>
<reference evidence="12" key="6">
    <citation type="journal article" date="2014" name="Science">
        <title>Structure of the large ribosomal subunit from human mitochondria.</title>
        <authorList>
            <person name="Brown A."/>
            <person name="Amunts A."/>
            <person name="Bai X.C."/>
            <person name="Sugimoto Y."/>
            <person name="Edwards P.C."/>
            <person name="Murshudov G."/>
            <person name="Scheres S.H."/>
            <person name="Ramakrishnan V."/>
        </authorList>
    </citation>
    <scope>STRUCTURE BY ELECTRON MICROSCOPY (3.40 ANGSTROMS)</scope>
    <scope>FUNCTION</scope>
    <scope>SUBCELLULAR LOCATION</scope>
    <scope>SUBUNIT</scope>
</reference>
<reference evidence="13" key="7">
    <citation type="journal article" date="2015" name="Science">
        <title>Ribosome. The structure of the human mitochondrial ribosome.</title>
        <authorList>
            <person name="Amunts A."/>
            <person name="Brown A."/>
            <person name="Toots J."/>
            <person name="Scheres S.H."/>
            <person name="Ramakrishnan V."/>
        </authorList>
    </citation>
    <scope>STRUCTURE BY ELECTRON MICROSCOPY (3.50 ANGSTROMS)</scope>
    <scope>FUNCTION</scope>
    <scope>SUBCELLULAR LOCATION</scope>
    <scope>SUBUNIT</scope>
</reference>
<reference evidence="14 15" key="8">
    <citation type="journal article" date="2017" name="Nat. Struct. Mol. Biol.">
        <title>Structures of the human mitochondrial ribosome in native states of assembly.</title>
        <authorList>
            <person name="Brown A."/>
            <person name="Rathore S."/>
            <person name="Kimanius D."/>
            <person name="Aibara S."/>
            <person name="Bai X.C."/>
            <person name="Rorbach J."/>
            <person name="Amunts A."/>
            <person name="Ramakrishnan V."/>
        </authorList>
    </citation>
    <scope>STRUCTURE BY ELECTRON MICROSCOPY (3.03 ANGSTROMS)</scope>
    <scope>FUNCTION</scope>
    <scope>SUBCELLULAR LOCATION</scope>
    <scope>SUBUNIT</scope>
</reference>
<reference evidence="17" key="9">
    <citation type="journal article" date="2020" name="Science">
        <title>Elongational stalling activates mitoribosome-associated quality control.</title>
        <authorList>
            <person name="Desai N."/>
            <person name="Yang H."/>
            <person name="Chandrasekaran V."/>
            <person name="Kazi R."/>
            <person name="Minczuk M."/>
            <person name="Ramakrishnan V."/>
        </authorList>
    </citation>
    <scope>STRUCTURE BY ELECTRON MICROSCOPY (3.70 ANGSTROMS) IN COMPLEX WITH MITOCHONDRIAL RIBOSOME</scope>
</reference>
<reference evidence="16" key="10">
    <citation type="journal article" date="2021" name="Science">
        <title>Mechanism of membrane-tethered mitochondrial protein synthesis.</title>
        <authorList>
            <person name="Itoh Y."/>
            <person name="Andrell J."/>
            <person name="Choi A."/>
            <person name="Richter U."/>
            <person name="Maiti P."/>
            <person name="Best R.B."/>
            <person name="Barrientos A."/>
            <person name="Battersby B.J."/>
            <person name="Amunts A."/>
        </authorList>
    </citation>
    <scope>STRUCTURE BY ELECTRON MICROSCOPY (2.89 ANGSTROMS) IN COMPLEX WITH MITOCHONDRIAL RIBOSOME</scope>
    <scope>FUNCTION</scope>
    <scope>SUBCELLULAR LOCATION</scope>
</reference>
<reference evidence="18 19" key="11">
    <citation type="journal article" date="2022" name="Nat. Commun.">
        <title>A late-stage assembly checkpoint of the human mitochondrial ribosome large subunit.</title>
        <authorList>
            <person name="Rebelo-Guiomar P."/>
            <person name="Pellegrino S."/>
            <person name="Dent K.C."/>
            <person name="Sas-Chen A."/>
            <person name="Miller-Fleming L."/>
            <person name="Garone C."/>
            <person name="Van Haute L."/>
            <person name="Rogan J.F."/>
            <person name="Dinan A."/>
            <person name="Firth A.E."/>
            <person name="Andrews B."/>
            <person name="Whitworth A.J."/>
            <person name="Schwartz S."/>
            <person name="Warren A.J."/>
            <person name="Minczuk M."/>
        </authorList>
    </citation>
    <scope>STRUCTURE BY ELECTRON MICROSCOPY (2.9 ANGSTROMS) IN COMPLEX WITH MTLSU</scope>
    <scope>SUBUNIT</scope>
</reference>
<feature type="transit peptide" description="Mitochondrion" evidence="1">
    <location>
        <begin position="1"/>
        <end status="unknown"/>
    </location>
</feature>
<feature type="chain" id="PRO_0000030563" description="Large ribosomal subunit protein mL45">
    <location>
        <begin status="unknown"/>
        <end position="306"/>
    </location>
</feature>
<feature type="region of interest" description="Disordered" evidence="2">
    <location>
        <begin position="287"/>
        <end position="306"/>
    </location>
</feature>
<feature type="sequence variant" id="VAR_061810" description="In dbSNP:rs34749623.">
    <original>G</original>
    <variation>V</variation>
    <location>
        <position position="298"/>
    </location>
</feature>
<feature type="sequence conflict" description="In Ref. 1; BAD18730." evidence="10" ref="1">
    <original>E</original>
    <variation>G</variation>
    <location>
        <position position="139"/>
    </location>
</feature>
<feature type="helix" evidence="20">
    <location>
        <begin position="49"/>
        <end position="51"/>
    </location>
</feature>
<feature type="helix" evidence="23">
    <location>
        <begin position="53"/>
        <end position="63"/>
    </location>
</feature>
<feature type="helix" evidence="20">
    <location>
        <begin position="119"/>
        <end position="129"/>
    </location>
</feature>
<feature type="turn" evidence="20">
    <location>
        <begin position="134"/>
        <end position="136"/>
    </location>
</feature>
<feature type="helix" evidence="20">
    <location>
        <begin position="137"/>
        <end position="154"/>
    </location>
</feature>
<feature type="helix" evidence="20">
    <location>
        <begin position="157"/>
        <end position="163"/>
    </location>
</feature>
<feature type="turn" evidence="20">
    <location>
        <begin position="166"/>
        <end position="168"/>
    </location>
</feature>
<feature type="helix" evidence="20">
    <location>
        <begin position="169"/>
        <end position="173"/>
    </location>
</feature>
<feature type="turn" evidence="20">
    <location>
        <begin position="175"/>
        <end position="178"/>
    </location>
</feature>
<feature type="strand" evidence="20">
    <location>
        <begin position="184"/>
        <end position="198"/>
    </location>
</feature>
<feature type="strand" evidence="20">
    <location>
        <begin position="209"/>
        <end position="221"/>
    </location>
</feature>
<feature type="strand" evidence="21">
    <location>
        <begin position="227"/>
        <end position="229"/>
    </location>
</feature>
<feature type="strand" evidence="20">
    <location>
        <begin position="231"/>
        <end position="234"/>
    </location>
</feature>
<feature type="strand" evidence="20">
    <location>
        <begin position="236"/>
        <end position="238"/>
    </location>
</feature>
<feature type="strand" evidence="20">
    <location>
        <begin position="240"/>
        <end position="251"/>
    </location>
</feature>
<feature type="strand" evidence="20">
    <location>
        <begin position="260"/>
        <end position="265"/>
    </location>
</feature>
<feature type="strand" evidence="22">
    <location>
        <begin position="276"/>
        <end position="278"/>
    </location>
</feature>
<feature type="strand" evidence="20">
    <location>
        <begin position="280"/>
        <end position="282"/>
    </location>
</feature>
<proteinExistence type="evidence at protein level"/>
<dbReference type="EMBL" id="AK172741">
    <property type="protein sequence ID" value="BAD18730.1"/>
    <property type="molecule type" value="mRNA"/>
</dbReference>
<dbReference type="EMBL" id="BC006235">
    <property type="status" value="NOT_ANNOTATED_CDS"/>
    <property type="molecule type" value="mRNA"/>
</dbReference>
<dbReference type="EMBL" id="BC130382">
    <property type="protein sequence ID" value="AAI30383.1"/>
    <property type="molecule type" value="mRNA"/>
</dbReference>
<dbReference type="EMBL" id="BC130384">
    <property type="protein sequence ID" value="AAI30385.1"/>
    <property type="molecule type" value="mRNA"/>
</dbReference>
<dbReference type="CCDS" id="CCDS11326.1"/>
<dbReference type="PDB" id="3J7Y">
    <property type="method" value="EM"/>
    <property type="resolution" value="3.40 A"/>
    <property type="chains" value="d=1-306"/>
</dbReference>
<dbReference type="PDB" id="3J9M">
    <property type="method" value="EM"/>
    <property type="resolution" value="3.50 A"/>
    <property type="chains" value="d=1-306"/>
</dbReference>
<dbReference type="PDB" id="5OOL">
    <property type="method" value="EM"/>
    <property type="resolution" value="3.06 A"/>
    <property type="chains" value="d=1-306"/>
</dbReference>
<dbReference type="PDB" id="5OOM">
    <property type="method" value="EM"/>
    <property type="resolution" value="3.03 A"/>
    <property type="chains" value="d=1-306"/>
</dbReference>
<dbReference type="PDB" id="6I9R">
    <property type="method" value="EM"/>
    <property type="resolution" value="3.90 A"/>
    <property type="chains" value="d=1-306"/>
</dbReference>
<dbReference type="PDB" id="6NU2">
    <property type="method" value="EM"/>
    <property type="resolution" value="3.90 A"/>
    <property type="chains" value="d=117-287"/>
</dbReference>
<dbReference type="PDB" id="6NU3">
    <property type="method" value="EM"/>
    <property type="resolution" value="4.40 A"/>
    <property type="chains" value="d=1-306"/>
</dbReference>
<dbReference type="PDB" id="6VLZ">
    <property type="method" value="EM"/>
    <property type="resolution" value="2.97 A"/>
    <property type="chains" value="d=1-306"/>
</dbReference>
<dbReference type="PDB" id="6VMI">
    <property type="method" value="EM"/>
    <property type="resolution" value="2.96 A"/>
    <property type="chains" value="d=1-306"/>
</dbReference>
<dbReference type="PDB" id="6ZM5">
    <property type="method" value="EM"/>
    <property type="resolution" value="2.89 A"/>
    <property type="chains" value="d=1-306"/>
</dbReference>
<dbReference type="PDB" id="6ZM6">
    <property type="method" value="EM"/>
    <property type="resolution" value="2.59 A"/>
    <property type="chains" value="d=1-306"/>
</dbReference>
<dbReference type="PDB" id="6ZS9">
    <property type="method" value="EM"/>
    <property type="resolution" value="4.00 A"/>
    <property type="chains" value="d=1-306"/>
</dbReference>
<dbReference type="PDB" id="6ZSA">
    <property type="method" value="EM"/>
    <property type="resolution" value="4.00 A"/>
    <property type="chains" value="d=55-306"/>
</dbReference>
<dbReference type="PDB" id="6ZSB">
    <property type="method" value="EM"/>
    <property type="resolution" value="4.50 A"/>
    <property type="chains" value="d=55-306"/>
</dbReference>
<dbReference type="PDB" id="6ZSC">
    <property type="method" value="EM"/>
    <property type="resolution" value="3.50 A"/>
    <property type="chains" value="d=55-306"/>
</dbReference>
<dbReference type="PDB" id="6ZSD">
    <property type="method" value="EM"/>
    <property type="resolution" value="3.70 A"/>
    <property type="chains" value="d=55-306"/>
</dbReference>
<dbReference type="PDB" id="6ZSE">
    <property type="method" value="EM"/>
    <property type="resolution" value="5.00 A"/>
    <property type="chains" value="d=56-306"/>
</dbReference>
<dbReference type="PDB" id="6ZSG">
    <property type="method" value="EM"/>
    <property type="resolution" value="4.00 A"/>
    <property type="chains" value="d=55-306"/>
</dbReference>
<dbReference type="PDB" id="7A5F">
    <property type="method" value="EM"/>
    <property type="resolution" value="4.40 A"/>
    <property type="chains" value="d3=1-306"/>
</dbReference>
<dbReference type="PDB" id="7A5G">
    <property type="method" value="EM"/>
    <property type="resolution" value="4.33 A"/>
    <property type="chains" value="d3=1-306"/>
</dbReference>
<dbReference type="PDB" id="7A5H">
    <property type="method" value="EM"/>
    <property type="resolution" value="3.30 A"/>
    <property type="chains" value="d=1-306"/>
</dbReference>
<dbReference type="PDB" id="7A5I">
    <property type="method" value="EM"/>
    <property type="resolution" value="3.70 A"/>
    <property type="chains" value="d3=1-306"/>
</dbReference>
<dbReference type="PDB" id="7A5J">
    <property type="method" value="EM"/>
    <property type="resolution" value="3.10 A"/>
    <property type="chains" value="d=1-306"/>
</dbReference>
<dbReference type="PDB" id="7A5K">
    <property type="method" value="EM"/>
    <property type="resolution" value="3.70 A"/>
    <property type="chains" value="d3=1-306"/>
</dbReference>
<dbReference type="PDB" id="7L08">
    <property type="method" value="EM"/>
    <property type="resolution" value="3.49 A"/>
    <property type="chains" value="d=1-306"/>
</dbReference>
<dbReference type="PDB" id="7L20">
    <property type="method" value="EM"/>
    <property type="resolution" value="3.15 A"/>
    <property type="chains" value="d=1-306"/>
</dbReference>
<dbReference type="PDB" id="7O9K">
    <property type="method" value="EM"/>
    <property type="resolution" value="3.10 A"/>
    <property type="chains" value="d=1-306"/>
</dbReference>
<dbReference type="PDB" id="7O9M">
    <property type="method" value="EM"/>
    <property type="resolution" value="2.50 A"/>
    <property type="chains" value="d=1-302"/>
</dbReference>
<dbReference type="PDB" id="7ODR">
    <property type="method" value="EM"/>
    <property type="resolution" value="2.90 A"/>
    <property type="chains" value="d=1-306"/>
</dbReference>
<dbReference type="PDB" id="7ODS">
    <property type="method" value="EM"/>
    <property type="resolution" value="3.10 A"/>
    <property type="chains" value="d=1-306"/>
</dbReference>
<dbReference type="PDB" id="7ODT">
    <property type="method" value="EM"/>
    <property type="resolution" value="3.10 A"/>
    <property type="chains" value="d=1-306"/>
</dbReference>
<dbReference type="PDB" id="7OF0">
    <property type="method" value="EM"/>
    <property type="resolution" value="2.20 A"/>
    <property type="chains" value="d=1-306"/>
</dbReference>
<dbReference type="PDB" id="7OF2">
    <property type="method" value="EM"/>
    <property type="resolution" value="2.70 A"/>
    <property type="chains" value="d=1-306"/>
</dbReference>
<dbReference type="PDB" id="7OF3">
    <property type="method" value="EM"/>
    <property type="resolution" value="2.70 A"/>
    <property type="chains" value="d=1-306"/>
</dbReference>
<dbReference type="PDB" id="7OF4">
    <property type="method" value="EM"/>
    <property type="resolution" value="2.70 A"/>
    <property type="chains" value="d=1-306"/>
</dbReference>
<dbReference type="PDB" id="7OF5">
    <property type="method" value="EM"/>
    <property type="resolution" value="2.90 A"/>
    <property type="chains" value="d=1-306"/>
</dbReference>
<dbReference type="PDB" id="7OF6">
    <property type="method" value="EM"/>
    <property type="resolution" value="2.60 A"/>
    <property type="chains" value="d=1-306"/>
</dbReference>
<dbReference type="PDB" id="7OF7">
    <property type="method" value="EM"/>
    <property type="resolution" value="2.50 A"/>
    <property type="chains" value="d=1-306"/>
</dbReference>
<dbReference type="PDB" id="7OG4">
    <property type="method" value="EM"/>
    <property type="resolution" value="3.80 A"/>
    <property type="chains" value="d=1-306"/>
</dbReference>
<dbReference type="PDB" id="7OI6">
    <property type="method" value="EM"/>
    <property type="resolution" value="5.70 A"/>
    <property type="chains" value="d=1-306"/>
</dbReference>
<dbReference type="PDB" id="7OI7">
    <property type="method" value="EM"/>
    <property type="resolution" value="3.50 A"/>
    <property type="chains" value="d=1-306"/>
</dbReference>
<dbReference type="PDB" id="7OI8">
    <property type="method" value="EM"/>
    <property type="resolution" value="3.50 A"/>
    <property type="chains" value="d=1-306"/>
</dbReference>
<dbReference type="PDB" id="7OI9">
    <property type="method" value="EM"/>
    <property type="resolution" value="3.30 A"/>
    <property type="chains" value="d=1-306"/>
</dbReference>
<dbReference type="PDB" id="7OIA">
    <property type="method" value="EM"/>
    <property type="resolution" value="3.20 A"/>
    <property type="chains" value="d=1-306"/>
</dbReference>
<dbReference type="PDB" id="7OIB">
    <property type="method" value="EM"/>
    <property type="resolution" value="3.30 A"/>
    <property type="chains" value="d=1-306"/>
</dbReference>
<dbReference type="PDB" id="7OIC">
    <property type="method" value="EM"/>
    <property type="resolution" value="3.10 A"/>
    <property type="chains" value="d=1-306"/>
</dbReference>
<dbReference type="PDB" id="7OID">
    <property type="method" value="EM"/>
    <property type="resolution" value="3.70 A"/>
    <property type="chains" value="d=1-306"/>
</dbReference>
<dbReference type="PDB" id="7OIE">
    <property type="method" value="EM"/>
    <property type="resolution" value="3.50 A"/>
    <property type="chains" value="d=1-306"/>
</dbReference>
<dbReference type="PDB" id="7PD3">
    <property type="method" value="EM"/>
    <property type="resolution" value="3.40 A"/>
    <property type="chains" value="d=1-306"/>
</dbReference>
<dbReference type="PDB" id="7PO4">
    <property type="method" value="EM"/>
    <property type="resolution" value="2.56 A"/>
    <property type="chains" value="d=1-306"/>
</dbReference>
<dbReference type="PDB" id="7QH6">
    <property type="method" value="EM"/>
    <property type="resolution" value="3.08 A"/>
    <property type="chains" value="d=1-306"/>
</dbReference>
<dbReference type="PDB" id="7QH7">
    <property type="method" value="EM"/>
    <property type="resolution" value="2.89 A"/>
    <property type="chains" value="d=117-285"/>
</dbReference>
<dbReference type="PDB" id="7QI4">
    <property type="method" value="EM"/>
    <property type="resolution" value="2.21 A"/>
    <property type="chains" value="d=1-306"/>
</dbReference>
<dbReference type="PDB" id="7QI5">
    <property type="method" value="EM"/>
    <property type="resolution" value="2.63 A"/>
    <property type="chains" value="d=1-306"/>
</dbReference>
<dbReference type="PDB" id="7QI6">
    <property type="method" value="EM"/>
    <property type="resolution" value="2.98 A"/>
    <property type="chains" value="d=1-306"/>
</dbReference>
<dbReference type="PDB" id="8ANY">
    <property type="method" value="EM"/>
    <property type="resolution" value="2.85 A"/>
    <property type="chains" value="d=1-306"/>
</dbReference>
<dbReference type="PDB" id="8K2A">
    <property type="method" value="EM"/>
    <property type="resolution" value="2.90 A"/>
    <property type="chains" value="Ls=1-306"/>
</dbReference>
<dbReference type="PDB" id="8K2B">
    <property type="method" value="EM"/>
    <property type="resolution" value="3.40 A"/>
    <property type="chains" value="Ls=1-306"/>
</dbReference>
<dbReference type="PDB" id="8OIR">
    <property type="method" value="EM"/>
    <property type="resolution" value="3.10 A"/>
    <property type="chains" value="Bu=1-306"/>
</dbReference>
<dbReference type="PDB" id="8OIT">
    <property type="method" value="EM"/>
    <property type="resolution" value="2.90 A"/>
    <property type="chains" value="Bu=1-306"/>
</dbReference>
<dbReference type="PDB" id="8PK0">
    <property type="method" value="EM"/>
    <property type="resolution" value="3.03 A"/>
    <property type="chains" value="d=1-306"/>
</dbReference>
<dbReference type="PDB" id="8QSJ">
    <property type="method" value="EM"/>
    <property type="resolution" value="3.00 A"/>
    <property type="chains" value="d=1-306"/>
</dbReference>
<dbReference type="PDB" id="8QU5">
    <property type="method" value="EM"/>
    <property type="resolution" value="2.42 A"/>
    <property type="chains" value="d=1-306"/>
</dbReference>
<dbReference type="PDB" id="8RRI">
    <property type="method" value="EM"/>
    <property type="resolution" value="2.40 A"/>
    <property type="chains" value="d=1-306"/>
</dbReference>
<dbReference type="PDB" id="8XT0">
    <property type="method" value="EM"/>
    <property type="resolution" value="3.20 A"/>
    <property type="chains" value="Ls=1-306"/>
</dbReference>
<dbReference type="PDB" id="8XT1">
    <property type="method" value="EM"/>
    <property type="resolution" value="3.10 A"/>
    <property type="chains" value="Ls=1-306"/>
</dbReference>
<dbReference type="PDB" id="8XT2">
    <property type="method" value="EM"/>
    <property type="resolution" value="3.30 A"/>
    <property type="chains" value="Ls=1-306"/>
</dbReference>
<dbReference type="PDB" id="8XT3">
    <property type="method" value="EM"/>
    <property type="resolution" value="3.10 A"/>
    <property type="chains" value="Ls=1-306"/>
</dbReference>
<dbReference type="PDBsum" id="3J7Y"/>
<dbReference type="PDBsum" id="3J9M"/>
<dbReference type="PDBsum" id="5OOL"/>
<dbReference type="PDBsum" id="5OOM"/>
<dbReference type="PDBsum" id="6I9R"/>
<dbReference type="PDBsum" id="6NU2"/>
<dbReference type="PDBsum" id="6NU3"/>
<dbReference type="PDBsum" id="6VLZ"/>
<dbReference type="PDBsum" id="6VMI"/>
<dbReference type="PDBsum" id="6ZM5"/>
<dbReference type="PDBsum" id="6ZM6"/>
<dbReference type="PDBsum" id="6ZS9"/>
<dbReference type="PDBsum" id="6ZSA"/>
<dbReference type="PDBsum" id="6ZSB"/>
<dbReference type="PDBsum" id="6ZSC"/>
<dbReference type="PDBsum" id="6ZSD"/>
<dbReference type="PDBsum" id="6ZSE"/>
<dbReference type="PDBsum" id="6ZSG"/>
<dbReference type="PDBsum" id="7A5F"/>
<dbReference type="PDBsum" id="7A5G"/>
<dbReference type="PDBsum" id="7A5H"/>
<dbReference type="PDBsum" id="7A5I"/>
<dbReference type="PDBsum" id="7A5J"/>
<dbReference type="PDBsum" id="7A5K"/>
<dbReference type="PDBsum" id="7L08"/>
<dbReference type="PDBsum" id="7L20"/>
<dbReference type="PDBsum" id="7O9K"/>
<dbReference type="PDBsum" id="7O9M"/>
<dbReference type="PDBsum" id="7ODR"/>
<dbReference type="PDBsum" id="7ODS"/>
<dbReference type="PDBsum" id="7ODT"/>
<dbReference type="PDBsum" id="7OF0"/>
<dbReference type="PDBsum" id="7OF2"/>
<dbReference type="PDBsum" id="7OF3"/>
<dbReference type="PDBsum" id="7OF4"/>
<dbReference type="PDBsum" id="7OF5"/>
<dbReference type="PDBsum" id="7OF6"/>
<dbReference type="PDBsum" id="7OF7"/>
<dbReference type="PDBsum" id="7OG4"/>
<dbReference type="PDBsum" id="7OI6"/>
<dbReference type="PDBsum" id="7OI7"/>
<dbReference type="PDBsum" id="7OI8"/>
<dbReference type="PDBsum" id="7OI9"/>
<dbReference type="PDBsum" id="7OIA"/>
<dbReference type="PDBsum" id="7OIB"/>
<dbReference type="PDBsum" id="7OIC"/>
<dbReference type="PDBsum" id="7OID"/>
<dbReference type="PDBsum" id="7OIE"/>
<dbReference type="PDBsum" id="7PD3"/>
<dbReference type="PDBsum" id="7PO4"/>
<dbReference type="PDBsum" id="7QH6"/>
<dbReference type="PDBsum" id="7QH7"/>
<dbReference type="PDBsum" id="7QI4"/>
<dbReference type="PDBsum" id="7QI5"/>
<dbReference type="PDBsum" id="7QI6"/>
<dbReference type="PDBsum" id="8ANY"/>
<dbReference type="PDBsum" id="8K2A"/>
<dbReference type="PDBsum" id="8K2B"/>
<dbReference type="PDBsum" id="8OIR"/>
<dbReference type="PDBsum" id="8OIT"/>
<dbReference type="PDBsum" id="8PK0"/>
<dbReference type="PDBsum" id="8QSJ"/>
<dbReference type="PDBsum" id="8QU5"/>
<dbReference type="PDBsum" id="8RRI"/>
<dbReference type="PDBsum" id="8XT0"/>
<dbReference type="PDBsum" id="8XT1"/>
<dbReference type="PDBsum" id="8XT2"/>
<dbReference type="PDBsum" id="8XT3"/>
<dbReference type="EMDB" id="EMD-0514"/>
<dbReference type="EMDB" id="EMD-11278"/>
<dbReference type="EMDB" id="EMD-11279"/>
<dbReference type="EMDB" id="EMD-11390"/>
<dbReference type="EMDB" id="EMD-11391"/>
<dbReference type="EMDB" id="EMD-11392"/>
<dbReference type="EMDB" id="EMD-11393"/>
<dbReference type="EMDB" id="EMD-11394"/>
<dbReference type="EMDB" id="EMD-11395"/>
<dbReference type="EMDB" id="EMD-11397"/>
<dbReference type="EMDB" id="EMD-11641"/>
<dbReference type="EMDB" id="EMD-11642"/>
<dbReference type="EMDB" id="EMD-11643"/>
<dbReference type="EMDB" id="EMD-11644"/>
<dbReference type="EMDB" id="EMD-11645"/>
<dbReference type="EMDB" id="EMD-11646"/>
<dbReference type="EMDB" id="EMD-12763"/>
<dbReference type="EMDB" id="EMD-12764"/>
<dbReference type="EMDB" id="EMD-12845"/>
<dbReference type="EMDB" id="EMD-12846"/>
<dbReference type="EMDB" id="EMD-12847"/>
<dbReference type="EMDB" id="EMD-12865"/>
<dbReference type="EMDB" id="EMD-12867"/>
<dbReference type="EMDB" id="EMD-12868"/>
<dbReference type="EMDB" id="EMD-12869"/>
<dbReference type="EMDB" id="EMD-12870"/>
<dbReference type="EMDB" id="EMD-12871"/>
<dbReference type="EMDB" id="EMD-12872"/>
<dbReference type="EMDB" id="EMD-12877"/>
<dbReference type="EMDB" id="EMD-12919"/>
<dbReference type="EMDB" id="EMD-12920"/>
<dbReference type="EMDB" id="EMD-12921"/>
<dbReference type="EMDB" id="EMD-12922"/>
<dbReference type="EMDB" id="EMD-12923"/>
<dbReference type="EMDB" id="EMD-12924"/>
<dbReference type="EMDB" id="EMD-12925"/>
<dbReference type="EMDB" id="EMD-12926"/>
<dbReference type="EMDB" id="EMD-12927"/>
<dbReference type="EMDB" id="EMD-13329"/>
<dbReference type="EMDB" id="EMD-13562"/>
<dbReference type="EMDB" id="EMD-13965"/>
<dbReference type="EMDB" id="EMD-13967"/>
<dbReference type="EMDB" id="EMD-13980"/>
<dbReference type="EMDB" id="EMD-13981"/>
<dbReference type="EMDB" id="EMD-13982"/>
<dbReference type="EMDB" id="EMD-15544"/>
<dbReference type="EMDB" id="EMD-16897"/>
<dbReference type="EMDB" id="EMD-16899"/>
<dbReference type="EMDB" id="EMD-17719"/>
<dbReference type="EMDB" id="EMD-19460"/>
<dbReference type="EMDB" id="EMD-21233"/>
<dbReference type="EMDB" id="EMD-21242"/>
<dbReference type="EMDB" id="EMD-23096"/>
<dbReference type="EMDB" id="EMD-23121"/>
<dbReference type="EMDB" id="EMD-36836"/>
<dbReference type="EMDB" id="EMD-36837"/>
<dbReference type="EMDB" id="EMD-3842"/>
<dbReference type="EMDB" id="EMD-3843"/>
<dbReference type="EMDB" id="EMD-38632"/>
<dbReference type="EMDB" id="EMD-38633"/>
<dbReference type="EMDB" id="EMD-38634"/>
<dbReference type="EMDB" id="EMD-38635"/>
<dbReference type="EMDB" id="EMD-4434"/>
<dbReference type="SMR" id="Q9BRJ2"/>
<dbReference type="ComplexPortal" id="CPX-5226">
    <property type="entry name" value="39S mitochondrial large ribosomal subunit"/>
</dbReference>
<dbReference type="CORUM" id="Q9BRJ2"/>
<dbReference type="DIP" id="DIP-53786N"/>
<dbReference type="FunCoup" id="Q9BRJ2">
    <property type="interactions" value="1095"/>
</dbReference>
<dbReference type="IntAct" id="Q9BRJ2">
    <property type="interactions" value="63"/>
</dbReference>
<dbReference type="MINT" id="Q9BRJ2"/>
<dbReference type="STRING" id="9606.ENSP00000484903"/>
<dbReference type="GlyGen" id="Q9BRJ2">
    <property type="glycosylation" value="1 site, 1 O-linked glycan (1 site)"/>
</dbReference>
<dbReference type="iPTMnet" id="Q9BRJ2"/>
<dbReference type="MetOSite" id="Q9BRJ2"/>
<dbReference type="PhosphoSitePlus" id="Q9BRJ2"/>
<dbReference type="SwissPalm" id="Q9BRJ2"/>
<dbReference type="BioMuta" id="MRPL45"/>
<dbReference type="DMDM" id="29611869"/>
<dbReference type="jPOST" id="Q9BRJ2"/>
<dbReference type="MassIVE" id="Q9BRJ2"/>
<dbReference type="PaxDb" id="9606-ENSP00000484903"/>
<dbReference type="PeptideAtlas" id="Q9BRJ2"/>
<dbReference type="ProteomicsDB" id="78769"/>
<dbReference type="Pumba" id="Q9BRJ2"/>
<dbReference type="DNASU" id="84311"/>
<dbReference type="Ensembl" id="ENST00000621878.4">
    <property type="protein sequence ID" value="ENSP00000483030.1"/>
    <property type="gene ID" value="ENSG00000277936.4"/>
</dbReference>
<dbReference type="UCSC" id="uc032gks.2">
    <property type="organism name" value="human"/>
</dbReference>
<dbReference type="AGR" id="HGNC:16651"/>
<dbReference type="GeneCards" id="MRPL45"/>
<dbReference type="HGNC" id="HGNC:16651">
    <property type="gene designation" value="MRPL45"/>
</dbReference>
<dbReference type="MIM" id="611850">
    <property type="type" value="gene"/>
</dbReference>
<dbReference type="neXtProt" id="NX_Q9BRJ2"/>
<dbReference type="eggNOG" id="KOG4599">
    <property type="taxonomic scope" value="Eukaryota"/>
</dbReference>
<dbReference type="InParanoid" id="Q9BRJ2"/>
<dbReference type="OrthoDB" id="19619at2759"/>
<dbReference type="PAN-GO" id="Q9BRJ2">
    <property type="GO annotations" value="1 GO annotation based on evolutionary models"/>
</dbReference>
<dbReference type="PhylomeDB" id="Q9BRJ2"/>
<dbReference type="TreeFam" id="TF105825"/>
<dbReference type="PathwayCommons" id="Q9BRJ2"/>
<dbReference type="Reactome" id="R-HSA-5368286">
    <property type="pathway name" value="Mitochondrial translation initiation"/>
</dbReference>
<dbReference type="Reactome" id="R-HSA-5389840">
    <property type="pathway name" value="Mitochondrial translation elongation"/>
</dbReference>
<dbReference type="Reactome" id="R-HSA-5419276">
    <property type="pathway name" value="Mitochondrial translation termination"/>
</dbReference>
<dbReference type="SignaLink" id="Q9BRJ2"/>
<dbReference type="SIGNOR" id="Q9BRJ2"/>
<dbReference type="ChiTaRS" id="MRPL45">
    <property type="organism name" value="human"/>
</dbReference>
<dbReference type="EvolutionaryTrace" id="Q9BRJ2"/>
<dbReference type="Pharos" id="Q9BRJ2">
    <property type="development level" value="Tdark"/>
</dbReference>
<dbReference type="PRO" id="PR:Q9BRJ2"/>
<dbReference type="Proteomes" id="UP000005640">
    <property type="component" value="Unplaced"/>
</dbReference>
<dbReference type="RNAct" id="Q9BRJ2">
    <property type="molecule type" value="protein"/>
</dbReference>
<dbReference type="GO" id="GO:0005743">
    <property type="term" value="C:mitochondrial inner membrane"/>
    <property type="evidence" value="ECO:0000304"/>
    <property type="project" value="Reactome"/>
</dbReference>
<dbReference type="GO" id="GO:0005762">
    <property type="term" value="C:mitochondrial large ribosomal subunit"/>
    <property type="evidence" value="ECO:0000314"/>
    <property type="project" value="UniProtKB"/>
</dbReference>
<dbReference type="GO" id="GO:0005739">
    <property type="term" value="C:mitochondrion"/>
    <property type="evidence" value="ECO:0000314"/>
    <property type="project" value="UniProtKB"/>
</dbReference>
<dbReference type="GO" id="GO:0003723">
    <property type="term" value="F:RNA binding"/>
    <property type="evidence" value="ECO:0007005"/>
    <property type="project" value="UniProtKB"/>
</dbReference>
<dbReference type="GO" id="GO:0003735">
    <property type="term" value="F:structural constituent of ribosome"/>
    <property type="evidence" value="ECO:0000314"/>
    <property type="project" value="UniProtKB"/>
</dbReference>
<dbReference type="GO" id="GO:0032543">
    <property type="term" value="P:mitochondrial translation"/>
    <property type="evidence" value="ECO:0000314"/>
    <property type="project" value="UniProtKB"/>
</dbReference>
<dbReference type="FunFam" id="3.10.450.240:FF:000003">
    <property type="entry name" value="39S ribosomal protein L45, mitochondrial"/>
    <property type="match status" value="1"/>
</dbReference>
<dbReference type="Gene3D" id="3.10.450.240">
    <property type="match status" value="1"/>
</dbReference>
<dbReference type="InterPro" id="IPR051975">
    <property type="entry name" value="mtLSU_mL45"/>
</dbReference>
<dbReference type="InterPro" id="IPR032710">
    <property type="entry name" value="NTF2-like_dom_sf"/>
</dbReference>
<dbReference type="InterPro" id="IPR007379">
    <property type="entry name" value="Tim44-like_dom"/>
</dbReference>
<dbReference type="PANTHER" id="PTHR28554">
    <property type="entry name" value="39S RIBOSOMAL PROTEIN L45, MITOCHONDRIAL"/>
    <property type="match status" value="1"/>
</dbReference>
<dbReference type="PANTHER" id="PTHR28554:SF1">
    <property type="entry name" value="LARGE RIBOSOMAL SUBUNIT PROTEIN ML45"/>
    <property type="match status" value="1"/>
</dbReference>
<dbReference type="Pfam" id="PF04280">
    <property type="entry name" value="Tim44"/>
    <property type="match status" value="1"/>
</dbReference>
<dbReference type="SMART" id="SM00978">
    <property type="entry name" value="Tim44"/>
    <property type="match status" value="1"/>
</dbReference>
<dbReference type="SUPFAM" id="SSF54427">
    <property type="entry name" value="NTF2-like"/>
    <property type="match status" value="1"/>
</dbReference>
<comment type="function">
    <text evidence="3 4 5 7 8">Component of the mitochondrial large ribosomal subunit (mt-LSU) (PubMed:25278503, PubMed:25838379, PubMed:28892042, PubMed:33602856, PubMed:35177605). Within the mitochondrial ribosomes, required to direct the nascent polypeptide toward the tunnel exit and position the exit at a distance from the membrane surface (PubMed:33602856).</text>
</comment>
<comment type="subunit">
    <text evidence="3 4 5 6 7">Component of the mitochondrial large ribosomal subunit (mt-LSU) (PubMed:25278503, PubMed:25838379, PubMed:28892042, PubMed:33243891, PubMed:33602856). Mature mammalian 55S mitochondrial ribosomes consist of a small (28S) and a large (39S) subunit (PubMed:25278503, PubMed:25838379, PubMed:28892042). The 28S small subunit contains a 12S ribosomal RNA (12S mt-rRNA) and 30 different proteins (PubMed:25278503, PubMed:25838379, PubMed:28892042). The 39S large subunit contains a 16S rRNA (16S mt-rRNA), a copy of mitochondrial valine transfer RNA (mt-tRNA(Val)), which plays an integral structural role, and 52 different proteins (PubMed:25278503, PubMed:25838379, PubMed:28892042).</text>
</comment>
<comment type="interaction">
    <interactant intactId="EBI-2514313">
        <id>Q9BRJ2</id>
    </interactant>
    <interactant intactId="EBI-2559016">
        <id>Q6NZI2</id>
        <label>CAVIN1</label>
    </interactant>
    <organismsDiffer>false</organismsDiffer>
    <experiments>3</experiments>
</comment>
<comment type="interaction">
    <interactant intactId="EBI-2514313">
        <id>Q9BRJ2</id>
    </interactant>
    <interactant intactId="EBI-489887">
        <id>P50402</id>
        <label>EMD</label>
    </interactant>
    <organismsDiffer>false</organismsDiffer>
    <experiments>3</experiments>
</comment>
<comment type="interaction">
    <interactant intactId="EBI-2514313">
        <id>Q9BRJ2</id>
    </interactant>
    <interactant intactId="EBI-357275">
        <id>Q99471</id>
        <label>PFDN5</label>
    </interactant>
    <organismsDiffer>false</organismsDiffer>
    <experiments>3</experiments>
</comment>
<comment type="interaction">
    <interactant intactId="EBI-2514313">
        <id>Q9BRJ2</id>
    </interactant>
    <interactant intactId="EBI-11079894">
        <id>Q9HB20</id>
        <label>PLEKHA3</label>
    </interactant>
    <organismsDiffer>false</organismsDiffer>
    <experiments>3</experiments>
</comment>
<comment type="interaction">
    <interactant intactId="EBI-2514313">
        <id>Q9BRJ2</id>
    </interactant>
    <interactant intactId="EBI-740098">
        <id>P36406</id>
        <label>TRIM23</label>
    </interactant>
    <organismsDiffer>false</organismsDiffer>
    <experiments>3</experiments>
</comment>
<comment type="subcellular location">
    <subcellularLocation>
        <location evidence="3 4 5 7">Mitochondrion</location>
    </subcellularLocation>
</comment>
<comment type="similarity">
    <text evidence="10">Belongs to the mitochondrion-specific ribosomal protein mL45 family.</text>
</comment>
<comment type="sequence caution" evidence="10">
    <conflict type="frameshift">
        <sequence resource="EMBL" id="BC006235"/>
    </conflict>
</comment>
<name>RM45_HUMAN</name>
<organism>
    <name type="scientific">Homo sapiens</name>
    <name type="common">Human</name>
    <dbReference type="NCBI Taxonomy" id="9606"/>
    <lineage>
        <taxon>Eukaryota</taxon>
        <taxon>Metazoa</taxon>
        <taxon>Chordata</taxon>
        <taxon>Craniata</taxon>
        <taxon>Vertebrata</taxon>
        <taxon>Euteleostomi</taxon>
        <taxon>Mammalia</taxon>
        <taxon>Eutheria</taxon>
        <taxon>Euarchontoglires</taxon>
        <taxon>Primates</taxon>
        <taxon>Haplorrhini</taxon>
        <taxon>Catarrhini</taxon>
        <taxon>Hominidae</taxon>
        <taxon>Homo</taxon>
    </lineage>
</organism>
<keyword id="KW-0002">3D-structure</keyword>
<keyword id="KW-0496">Mitochondrion</keyword>
<keyword id="KW-1267">Proteomics identification</keyword>
<keyword id="KW-1185">Reference proteome</keyword>
<keyword id="KW-0687">Ribonucleoprotein</keyword>
<keyword id="KW-0689">Ribosomal protein</keyword>
<keyword id="KW-0809">Transit peptide</keyword>
<gene>
    <name evidence="11" type="primary">MRPL45</name>
</gene>